<reference key="1">
    <citation type="journal article" date="2002" name="Nature">
        <title>The genome sequence of Schizosaccharomyces pombe.</title>
        <authorList>
            <person name="Wood V."/>
            <person name="Gwilliam R."/>
            <person name="Rajandream M.A."/>
            <person name="Lyne M.H."/>
            <person name="Lyne R."/>
            <person name="Stewart A."/>
            <person name="Sgouros J.G."/>
            <person name="Peat N."/>
            <person name="Hayles J."/>
            <person name="Baker S.G."/>
            <person name="Basham D."/>
            <person name="Bowman S."/>
            <person name="Brooks K."/>
            <person name="Brown D."/>
            <person name="Brown S."/>
            <person name="Chillingworth T."/>
            <person name="Churcher C.M."/>
            <person name="Collins M."/>
            <person name="Connor R."/>
            <person name="Cronin A."/>
            <person name="Davis P."/>
            <person name="Feltwell T."/>
            <person name="Fraser A."/>
            <person name="Gentles S."/>
            <person name="Goble A."/>
            <person name="Hamlin N."/>
            <person name="Harris D.E."/>
            <person name="Hidalgo J."/>
            <person name="Hodgson G."/>
            <person name="Holroyd S."/>
            <person name="Hornsby T."/>
            <person name="Howarth S."/>
            <person name="Huckle E.J."/>
            <person name="Hunt S."/>
            <person name="Jagels K."/>
            <person name="James K.D."/>
            <person name="Jones L."/>
            <person name="Jones M."/>
            <person name="Leather S."/>
            <person name="McDonald S."/>
            <person name="McLean J."/>
            <person name="Mooney P."/>
            <person name="Moule S."/>
            <person name="Mungall K.L."/>
            <person name="Murphy L.D."/>
            <person name="Niblett D."/>
            <person name="Odell C."/>
            <person name="Oliver K."/>
            <person name="O'Neil S."/>
            <person name="Pearson D."/>
            <person name="Quail M.A."/>
            <person name="Rabbinowitsch E."/>
            <person name="Rutherford K.M."/>
            <person name="Rutter S."/>
            <person name="Saunders D."/>
            <person name="Seeger K."/>
            <person name="Sharp S."/>
            <person name="Skelton J."/>
            <person name="Simmonds M.N."/>
            <person name="Squares R."/>
            <person name="Squares S."/>
            <person name="Stevens K."/>
            <person name="Taylor K."/>
            <person name="Taylor R.G."/>
            <person name="Tivey A."/>
            <person name="Walsh S.V."/>
            <person name="Warren T."/>
            <person name="Whitehead S."/>
            <person name="Woodward J.R."/>
            <person name="Volckaert G."/>
            <person name="Aert R."/>
            <person name="Robben J."/>
            <person name="Grymonprez B."/>
            <person name="Weltjens I."/>
            <person name="Vanstreels E."/>
            <person name="Rieger M."/>
            <person name="Schaefer M."/>
            <person name="Mueller-Auer S."/>
            <person name="Gabel C."/>
            <person name="Fuchs M."/>
            <person name="Duesterhoeft A."/>
            <person name="Fritzc C."/>
            <person name="Holzer E."/>
            <person name="Moestl D."/>
            <person name="Hilbert H."/>
            <person name="Borzym K."/>
            <person name="Langer I."/>
            <person name="Beck A."/>
            <person name="Lehrach H."/>
            <person name="Reinhardt R."/>
            <person name="Pohl T.M."/>
            <person name="Eger P."/>
            <person name="Zimmermann W."/>
            <person name="Wedler H."/>
            <person name="Wambutt R."/>
            <person name="Purnelle B."/>
            <person name="Goffeau A."/>
            <person name="Cadieu E."/>
            <person name="Dreano S."/>
            <person name="Gloux S."/>
            <person name="Lelaure V."/>
            <person name="Mottier S."/>
            <person name="Galibert F."/>
            <person name="Aves S.J."/>
            <person name="Xiang Z."/>
            <person name="Hunt C."/>
            <person name="Moore K."/>
            <person name="Hurst S.M."/>
            <person name="Lucas M."/>
            <person name="Rochet M."/>
            <person name="Gaillardin C."/>
            <person name="Tallada V.A."/>
            <person name="Garzon A."/>
            <person name="Thode G."/>
            <person name="Daga R.R."/>
            <person name="Cruzado L."/>
            <person name="Jimenez J."/>
            <person name="Sanchez M."/>
            <person name="del Rey F."/>
            <person name="Benito J."/>
            <person name="Dominguez A."/>
            <person name="Revuelta J.L."/>
            <person name="Moreno S."/>
            <person name="Armstrong J."/>
            <person name="Forsburg S.L."/>
            <person name="Cerutti L."/>
            <person name="Lowe T."/>
            <person name="McCombie W.R."/>
            <person name="Paulsen I."/>
            <person name="Potashkin J."/>
            <person name="Shpakovski G.V."/>
            <person name="Ussery D."/>
            <person name="Barrell B.G."/>
            <person name="Nurse P."/>
        </authorList>
    </citation>
    <scope>NUCLEOTIDE SEQUENCE [LARGE SCALE GENOMIC DNA]</scope>
    <source>
        <strain>972 / ATCC 24843</strain>
    </source>
</reference>
<reference key="2">
    <citation type="journal article" date="2006" name="Nat. Biotechnol.">
        <title>ORFeome cloning and global analysis of protein localization in the fission yeast Schizosaccharomyces pombe.</title>
        <authorList>
            <person name="Matsuyama A."/>
            <person name="Arai R."/>
            <person name="Yashiroda Y."/>
            <person name="Shirai A."/>
            <person name="Kamata A."/>
            <person name="Sekido S."/>
            <person name="Kobayashi Y."/>
            <person name="Hashimoto A."/>
            <person name="Hamamoto M."/>
            <person name="Hiraoka Y."/>
            <person name="Horinouchi S."/>
            <person name="Yoshida M."/>
        </authorList>
    </citation>
    <scope>SUBCELLULAR LOCATION [LARGE SCALE ANALYSIS]</scope>
</reference>
<accession>O94652</accession>
<feature type="chain" id="PRO_0000363391" description="mRNA export factor gle1">
    <location>
        <begin position="1"/>
        <end position="480"/>
    </location>
</feature>
<feature type="region of interest" description="Disordered" evidence="3">
    <location>
        <begin position="128"/>
        <end position="196"/>
    </location>
</feature>
<feature type="coiled-coil region" evidence="2">
    <location>
        <begin position="91"/>
        <end position="190"/>
    </location>
</feature>
<feature type="compositionally biased region" description="Basic and acidic residues" evidence="3">
    <location>
        <begin position="128"/>
        <end position="193"/>
    </location>
</feature>
<keyword id="KW-0175">Coiled coil</keyword>
<keyword id="KW-0963">Cytoplasm</keyword>
<keyword id="KW-0472">Membrane</keyword>
<keyword id="KW-0509">mRNA transport</keyword>
<keyword id="KW-0906">Nuclear pore complex</keyword>
<keyword id="KW-0539">Nucleus</keyword>
<keyword id="KW-0653">Protein transport</keyword>
<keyword id="KW-1185">Reference proteome</keyword>
<keyword id="KW-0811">Translocation</keyword>
<keyword id="KW-0813">Transport</keyword>
<organism>
    <name type="scientific">Schizosaccharomyces pombe (strain 972 / ATCC 24843)</name>
    <name type="common">Fission yeast</name>
    <dbReference type="NCBI Taxonomy" id="284812"/>
    <lineage>
        <taxon>Eukaryota</taxon>
        <taxon>Fungi</taxon>
        <taxon>Dikarya</taxon>
        <taxon>Ascomycota</taxon>
        <taxon>Taphrinomycotina</taxon>
        <taxon>Schizosaccharomycetes</taxon>
        <taxon>Schizosaccharomycetales</taxon>
        <taxon>Schizosaccharomycetaceae</taxon>
        <taxon>Schizosaccharomyces</taxon>
    </lineage>
</organism>
<gene>
    <name type="primary">gle1</name>
    <name type="ORF">SPBC31E1.05</name>
</gene>
<proteinExistence type="inferred from homology"/>
<comment type="function">
    <text evidence="1">Functions as a component of the nuclear pore complex (NPC). NPC components, collectively referred to as nucleoporins (NUPs), can play the role of both NPC structural components and of docking or interaction partners for transiently associated nuclear transport factors. It is specifically involved in a terminal step of poly(A)+ mRNA transport through the NPC (By similarity).</text>
</comment>
<comment type="subunit">
    <text evidence="1">Component of the nuclear pore complex (NPC). NPC constitutes the exclusive means of nucleocytoplasmic transport. NPCs allow the passive diffusion of ions and small molecules and the active, nuclear transport receptor-mediated bidirectional transport of macromolecules such as proteins, RNAs, ribonucleoparticles (RNPs), and ribosomal subunits across the nuclear envelope (By similarity).</text>
</comment>
<comment type="subcellular location">
    <subcellularLocation>
        <location evidence="4">Cytoplasm</location>
    </subcellularLocation>
    <subcellularLocation>
        <location evidence="1">Nucleus</location>
        <location evidence="1">Nuclear pore complex</location>
    </subcellularLocation>
    <subcellularLocation>
        <location evidence="4">Nucleus membrane</location>
        <topology evidence="4">Peripheral membrane protein</topology>
        <orientation evidence="4">Cytoplasmic side</orientation>
    </subcellularLocation>
    <subcellularLocation>
        <location evidence="4">Nucleus membrane</location>
        <topology evidence="4">Peripheral membrane protein</topology>
        <orientation evidence="4">Nucleoplasmic side</orientation>
    </subcellularLocation>
</comment>
<comment type="similarity">
    <text evidence="5">Belongs to the GLE1 family.</text>
</comment>
<protein>
    <recommendedName>
        <fullName evidence="5">mRNA export factor gle1</fullName>
    </recommendedName>
    <alternativeName>
        <fullName evidence="5">Nuclear pore protein gle1</fullName>
    </alternativeName>
    <alternativeName>
        <fullName evidence="5">Nucleoporin gle1</fullName>
    </alternativeName>
    <alternativeName>
        <fullName evidence="5">RNA export factor gle1</fullName>
    </alternativeName>
</protein>
<sequence length="480" mass="56295">MDTKTTPLIHAKLDEKIISSYNDANGLDIDDLWDIYNEKTRRMIHIISQRYKPKKQSPFPVIADENVRIFPPLHKTIDWAKKRNVEEQNLIEQSITESQRIFSEKQRLEQERFNRELLEKKRIEAERQRLKDEEERRKKELMEKEKKEKERIRLIEEQKHKENEQRRLKQEQIDAKRKEEEAREKRMKETFKDDPEEDSNMAWSIIHKIKTEVVAPISEKKELKNYCFTQKRKITPRLGQITKSNSQIMKITQLLQQTFQEARNTDPLVYKWVLNFFCKSVVKQAEAEVAVNPISAYPLAKVCLLLQTQNADLKDLLFARLQKNCPWVIPFWYDHGTENGKKKMGFKKLSDGHWEQNTTYNERQCGIFAVYAAILSLDDSLAPESWRTFSRLLNLPSPSQLMKSDLELGQTLCSIVSTYLDIAGQSLLRIYGRQAKKLIVCSFSEAYLGANGGGSQYGRLRIVGEDWMKGQGGLKFSFEP</sequence>
<evidence type="ECO:0000250" key="1"/>
<evidence type="ECO:0000255" key="2"/>
<evidence type="ECO:0000256" key="3">
    <source>
        <dbReference type="SAM" id="MobiDB-lite"/>
    </source>
</evidence>
<evidence type="ECO:0000269" key="4">
    <source>
    </source>
</evidence>
<evidence type="ECO:0000305" key="5"/>
<dbReference type="EMBL" id="CU329671">
    <property type="protein sequence ID" value="CAB39139.1"/>
    <property type="molecule type" value="Genomic_DNA"/>
</dbReference>
<dbReference type="PIR" id="T40202">
    <property type="entry name" value="T40202"/>
</dbReference>
<dbReference type="RefSeq" id="NP_595101.1">
    <property type="nucleotide sequence ID" value="NM_001021008.2"/>
</dbReference>
<dbReference type="SMR" id="O94652"/>
<dbReference type="BioGRID" id="276923">
    <property type="interactions" value="5"/>
</dbReference>
<dbReference type="FunCoup" id="O94652">
    <property type="interactions" value="112"/>
</dbReference>
<dbReference type="IntAct" id="O94652">
    <property type="interactions" value="1"/>
</dbReference>
<dbReference type="STRING" id="284812.O94652"/>
<dbReference type="iPTMnet" id="O94652"/>
<dbReference type="PaxDb" id="4896-SPBC31E1.05.1"/>
<dbReference type="EnsemblFungi" id="SPBC31E1.05.1">
    <property type="protein sequence ID" value="SPBC31E1.05.1:pep"/>
    <property type="gene ID" value="SPBC31E1.05"/>
</dbReference>
<dbReference type="GeneID" id="2540395"/>
<dbReference type="KEGG" id="spo:2540395"/>
<dbReference type="PomBase" id="SPBC31E1.05">
    <property type="gene designation" value="gle1"/>
</dbReference>
<dbReference type="VEuPathDB" id="FungiDB:SPBC31E1.05"/>
<dbReference type="eggNOG" id="KOG2412">
    <property type="taxonomic scope" value="Eukaryota"/>
</dbReference>
<dbReference type="HOGENOM" id="CLU_029651_0_0_1"/>
<dbReference type="InParanoid" id="O94652"/>
<dbReference type="PhylomeDB" id="O94652"/>
<dbReference type="Reactome" id="R-SPO-159236">
    <property type="pathway name" value="Transport of Mature mRNA derived from an Intron-Containing Transcript"/>
</dbReference>
<dbReference type="PRO" id="PR:O94652"/>
<dbReference type="Proteomes" id="UP000002485">
    <property type="component" value="Chromosome II"/>
</dbReference>
<dbReference type="GO" id="GO:0005737">
    <property type="term" value="C:cytoplasm"/>
    <property type="evidence" value="ECO:0000314"/>
    <property type="project" value="PomBase"/>
</dbReference>
<dbReference type="GO" id="GO:0005829">
    <property type="term" value="C:cytosol"/>
    <property type="evidence" value="ECO:0007005"/>
    <property type="project" value="PomBase"/>
</dbReference>
<dbReference type="GO" id="GO:0005635">
    <property type="term" value="C:nuclear envelope"/>
    <property type="evidence" value="ECO:0007005"/>
    <property type="project" value="PomBase"/>
</dbReference>
<dbReference type="GO" id="GO:0031965">
    <property type="term" value="C:nuclear membrane"/>
    <property type="evidence" value="ECO:0007669"/>
    <property type="project" value="UniProtKB-SubCell"/>
</dbReference>
<dbReference type="GO" id="GO:0034399">
    <property type="term" value="C:nuclear periphery"/>
    <property type="evidence" value="ECO:0000314"/>
    <property type="project" value="PomBase"/>
</dbReference>
<dbReference type="GO" id="GO:0005643">
    <property type="term" value="C:nuclear pore"/>
    <property type="evidence" value="ECO:0000314"/>
    <property type="project" value="PomBase"/>
</dbReference>
<dbReference type="GO" id="GO:0044614">
    <property type="term" value="C:nuclear pore cytoplasmic filaments"/>
    <property type="evidence" value="ECO:0000318"/>
    <property type="project" value="GO_Central"/>
</dbReference>
<dbReference type="GO" id="GO:0005634">
    <property type="term" value="C:nucleus"/>
    <property type="evidence" value="ECO:0000314"/>
    <property type="project" value="PomBase"/>
</dbReference>
<dbReference type="GO" id="GO:0000822">
    <property type="term" value="F:inositol hexakisphosphate binding"/>
    <property type="evidence" value="ECO:0000318"/>
    <property type="project" value="GO_Central"/>
</dbReference>
<dbReference type="GO" id="GO:0005543">
    <property type="term" value="F:phospholipid binding"/>
    <property type="evidence" value="ECO:0000318"/>
    <property type="project" value="GO_Central"/>
</dbReference>
<dbReference type="GO" id="GO:0031369">
    <property type="term" value="F:translation initiation factor binding"/>
    <property type="evidence" value="ECO:0000318"/>
    <property type="project" value="GO_Central"/>
</dbReference>
<dbReference type="GO" id="GO:0016973">
    <property type="term" value="P:poly(A)+ mRNA export from nucleus"/>
    <property type="evidence" value="ECO:0000315"/>
    <property type="project" value="PomBase"/>
</dbReference>
<dbReference type="GO" id="GO:0015031">
    <property type="term" value="P:protein transport"/>
    <property type="evidence" value="ECO:0007669"/>
    <property type="project" value="UniProtKB-KW"/>
</dbReference>
<dbReference type="FunFam" id="1.25.40.510:FF:000003">
    <property type="entry name" value="Nucleoporin GLE1"/>
    <property type="match status" value="1"/>
</dbReference>
<dbReference type="Gene3D" id="1.25.40.510">
    <property type="entry name" value="GLE1-like"/>
    <property type="match status" value="1"/>
</dbReference>
<dbReference type="InterPro" id="IPR012476">
    <property type="entry name" value="GLE1"/>
</dbReference>
<dbReference type="InterPro" id="IPR038506">
    <property type="entry name" value="GLE1-like_sf"/>
</dbReference>
<dbReference type="PANTHER" id="PTHR12960">
    <property type="entry name" value="GLE-1-RELATED"/>
    <property type="match status" value="1"/>
</dbReference>
<dbReference type="PANTHER" id="PTHR12960:SF0">
    <property type="entry name" value="MRNA EXPORT FACTOR GLE1"/>
    <property type="match status" value="1"/>
</dbReference>
<dbReference type="Pfam" id="PF07817">
    <property type="entry name" value="GLE1"/>
    <property type="match status" value="1"/>
</dbReference>
<name>GLE1_SCHPO</name>